<feature type="chain" id="PRO_1000068716" description="Rhamnulokinase">
    <location>
        <begin position="1"/>
        <end position="489"/>
    </location>
</feature>
<feature type="active site" description="Proton acceptor" evidence="1">
    <location>
        <position position="237"/>
    </location>
</feature>
<feature type="binding site" evidence="1">
    <location>
        <begin position="13"/>
        <end position="17"/>
    </location>
    <ligand>
        <name>ATP</name>
        <dbReference type="ChEBI" id="CHEBI:30616"/>
    </ligand>
</feature>
<feature type="binding site" evidence="1">
    <location>
        <position position="83"/>
    </location>
    <ligand>
        <name>substrate</name>
    </ligand>
</feature>
<feature type="binding site" evidence="1">
    <location>
        <begin position="236"/>
        <end position="238"/>
    </location>
    <ligand>
        <name>substrate</name>
    </ligand>
</feature>
<feature type="binding site" evidence="1">
    <location>
        <position position="259"/>
    </location>
    <ligand>
        <name>ATP</name>
        <dbReference type="ChEBI" id="CHEBI:30616"/>
    </ligand>
</feature>
<feature type="binding site" evidence="1">
    <location>
        <position position="296"/>
    </location>
    <ligand>
        <name>substrate</name>
    </ligand>
</feature>
<feature type="binding site" evidence="1">
    <location>
        <position position="304"/>
    </location>
    <ligand>
        <name>ATP</name>
        <dbReference type="ChEBI" id="CHEBI:30616"/>
    </ligand>
</feature>
<feature type="binding site" evidence="1">
    <location>
        <position position="402"/>
    </location>
    <ligand>
        <name>ATP</name>
        <dbReference type="ChEBI" id="CHEBI:30616"/>
    </ligand>
</feature>
<feature type="disulfide bond" evidence="1">
    <location>
        <begin position="68"/>
        <end position="222"/>
    </location>
</feature>
<feature type="disulfide bond" evidence="1">
    <location>
        <begin position="353"/>
        <end position="370"/>
    </location>
</feature>
<feature type="disulfide bond" evidence="1">
    <location>
        <begin position="413"/>
        <end position="417"/>
    </location>
</feature>
<name>RHAB_ECOHS</name>
<proteinExistence type="inferred from homology"/>
<organism>
    <name type="scientific">Escherichia coli O9:H4 (strain HS)</name>
    <dbReference type="NCBI Taxonomy" id="331112"/>
    <lineage>
        <taxon>Bacteria</taxon>
        <taxon>Pseudomonadati</taxon>
        <taxon>Pseudomonadota</taxon>
        <taxon>Gammaproteobacteria</taxon>
        <taxon>Enterobacterales</taxon>
        <taxon>Enterobacteriaceae</taxon>
        <taxon>Escherichia</taxon>
    </lineage>
</organism>
<dbReference type="EC" id="2.7.1.5" evidence="1"/>
<dbReference type="EMBL" id="CP000802">
    <property type="protein sequence ID" value="ABV08311.1"/>
    <property type="molecule type" value="Genomic_DNA"/>
</dbReference>
<dbReference type="RefSeq" id="WP_000144074.1">
    <property type="nucleotide sequence ID" value="NC_009800.1"/>
</dbReference>
<dbReference type="SMR" id="A8A707"/>
<dbReference type="KEGG" id="ecx:EcHS_A4133"/>
<dbReference type="HOGENOM" id="CLU_039395_0_0_6"/>
<dbReference type="UniPathway" id="UPA00541">
    <property type="reaction ID" value="UER00602"/>
</dbReference>
<dbReference type="GO" id="GO:0005829">
    <property type="term" value="C:cytosol"/>
    <property type="evidence" value="ECO:0007669"/>
    <property type="project" value="TreeGrafter"/>
</dbReference>
<dbReference type="GO" id="GO:0005524">
    <property type="term" value="F:ATP binding"/>
    <property type="evidence" value="ECO:0007669"/>
    <property type="project" value="UniProtKB-KW"/>
</dbReference>
<dbReference type="GO" id="GO:0004370">
    <property type="term" value="F:glycerol kinase activity"/>
    <property type="evidence" value="ECO:0007669"/>
    <property type="project" value="TreeGrafter"/>
</dbReference>
<dbReference type="GO" id="GO:0008993">
    <property type="term" value="F:rhamnulokinase activity"/>
    <property type="evidence" value="ECO:0007669"/>
    <property type="project" value="UniProtKB-UniRule"/>
</dbReference>
<dbReference type="GO" id="GO:0006071">
    <property type="term" value="P:glycerol metabolic process"/>
    <property type="evidence" value="ECO:0007669"/>
    <property type="project" value="TreeGrafter"/>
</dbReference>
<dbReference type="GO" id="GO:0019301">
    <property type="term" value="P:rhamnose catabolic process"/>
    <property type="evidence" value="ECO:0007669"/>
    <property type="project" value="UniProtKB-UniRule"/>
</dbReference>
<dbReference type="CDD" id="cd07771">
    <property type="entry name" value="ASKHA_NBD_FGGY_RhaB-like"/>
    <property type="match status" value="1"/>
</dbReference>
<dbReference type="FunFam" id="3.30.420.40:FF:000064">
    <property type="entry name" value="Rhamnulokinase"/>
    <property type="match status" value="1"/>
</dbReference>
<dbReference type="FunFam" id="3.30.420.40:FF:000073">
    <property type="entry name" value="Rhamnulokinase"/>
    <property type="match status" value="1"/>
</dbReference>
<dbReference type="Gene3D" id="3.30.420.40">
    <property type="match status" value="2"/>
</dbReference>
<dbReference type="HAMAP" id="MF_01535">
    <property type="entry name" value="Rhamnulokinase"/>
    <property type="match status" value="1"/>
</dbReference>
<dbReference type="InterPro" id="IPR043129">
    <property type="entry name" value="ATPase_NBD"/>
</dbReference>
<dbReference type="InterPro" id="IPR018485">
    <property type="entry name" value="FGGY_C"/>
</dbReference>
<dbReference type="InterPro" id="IPR018484">
    <property type="entry name" value="FGGY_N"/>
</dbReference>
<dbReference type="InterPro" id="IPR013449">
    <property type="entry name" value="Rhamnulokinase"/>
</dbReference>
<dbReference type="NCBIfam" id="NF007925">
    <property type="entry name" value="PRK10640.1"/>
    <property type="match status" value="1"/>
</dbReference>
<dbReference type="NCBIfam" id="TIGR02627">
    <property type="entry name" value="rhamnulo_kin"/>
    <property type="match status" value="1"/>
</dbReference>
<dbReference type="PANTHER" id="PTHR10196:SF93">
    <property type="entry name" value="L-RHAMNULOKINASE"/>
    <property type="match status" value="1"/>
</dbReference>
<dbReference type="PANTHER" id="PTHR10196">
    <property type="entry name" value="SUGAR KINASE"/>
    <property type="match status" value="1"/>
</dbReference>
<dbReference type="Pfam" id="PF02782">
    <property type="entry name" value="FGGY_C"/>
    <property type="match status" value="1"/>
</dbReference>
<dbReference type="Pfam" id="PF00370">
    <property type="entry name" value="FGGY_N"/>
    <property type="match status" value="1"/>
</dbReference>
<dbReference type="SUPFAM" id="SSF53067">
    <property type="entry name" value="Actin-like ATPase domain"/>
    <property type="match status" value="2"/>
</dbReference>
<gene>
    <name evidence="1" type="primary">rhaB</name>
    <name type="ordered locus">EcHS_A4133</name>
</gene>
<keyword id="KW-0067">ATP-binding</keyword>
<keyword id="KW-1015">Disulfide bond</keyword>
<keyword id="KW-0418">Kinase</keyword>
<keyword id="KW-0460">Magnesium</keyword>
<keyword id="KW-0547">Nucleotide-binding</keyword>
<keyword id="KW-0684">Rhamnose metabolism</keyword>
<keyword id="KW-0808">Transferase</keyword>
<comment type="function">
    <text evidence="1">Involved in the catabolism of L-rhamnose (6-deoxy-L-mannose). Catalyzes the transfer of the gamma-phosphate group from ATP to the 1-hydroxyl group of L-rhamnulose to yield L-rhamnulose 1-phosphate.</text>
</comment>
<comment type="catalytic activity">
    <reaction evidence="1">
        <text>L-rhamnulose + ATP = L-rhamnulose 1-phosphate + ADP + H(+)</text>
        <dbReference type="Rhea" id="RHEA:20117"/>
        <dbReference type="ChEBI" id="CHEBI:15378"/>
        <dbReference type="ChEBI" id="CHEBI:17897"/>
        <dbReference type="ChEBI" id="CHEBI:30616"/>
        <dbReference type="ChEBI" id="CHEBI:58313"/>
        <dbReference type="ChEBI" id="CHEBI:456216"/>
        <dbReference type="EC" id="2.7.1.5"/>
    </reaction>
</comment>
<comment type="cofactor">
    <cofactor evidence="1">
        <name>Mg(2+)</name>
        <dbReference type="ChEBI" id="CHEBI:18420"/>
    </cofactor>
</comment>
<comment type="pathway">
    <text evidence="1">Carbohydrate degradation; L-rhamnose degradation; glycerone phosphate from L-rhamnose: step 2/3.</text>
</comment>
<comment type="subunit">
    <text evidence="1">Monomer.</text>
</comment>
<comment type="similarity">
    <text evidence="1">Belongs to the rhamnulokinase family.</text>
</comment>
<reference key="1">
    <citation type="journal article" date="2008" name="J. Bacteriol.">
        <title>The pangenome structure of Escherichia coli: comparative genomic analysis of E. coli commensal and pathogenic isolates.</title>
        <authorList>
            <person name="Rasko D.A."/>
            <person name="Rosovitz M.J."/>
            <person name="Myers G.S.A."/>
            <person name="Mongodin E.F."/>
            <person name="Fricke W.F."/>
            <person name="Gajer P."/>
            <person name="Crabtree J."/>
            <person name="Sebaihia M."/>
            <person name="Thomson N.R."/>
            <person name="Chaudhuri R."/>
            <person name="Henderson I.R."/>
            <person name="Sperandio V."/>
            <person name="Ravel J."/>
        </authorList>
    </citation>
    <scope>NUCLEOTIDE SEQUENCE [LARGE SCALE GENOMIC DNA]</scope>
    <source>
        <strain>HS</strain>
    </source>
</reference>
<evidence type="ECO:0000255" key="1">
    <source>
        <dbReference type="HAMAP-Rule" id="MF_01535"/>
    </source>
</evidence>
<protein>
    <recommendedName>
        <fullName evidence="1">Rhamnulokinase</fullName>
        <shortName evidence="1">RhaB</shortName>
        <ecNumber evidence="1">2.7.1.5</ecNumber>
    </recommendedName>
    <alternativeName>
        <fullName evidence="1">ATP:L-rhamnulose phosphotransferase</fullName>
    </alternativeName>
    <alternativeName>
        <fullName evidence="1">L-rhamnulose 1-kinase</fullName>
    </alternativeName>
    <alternativeName>
        <fullName evidence="1">Rhamnulose kinase</fullName>
    </alternativeName>
</protein>
<sequence length="489" mass="54123">MTFRNCVAVDLGASSGRVMLARYERECRSLTLREIHRFNNGLHSQNGYVTWDVDSLESAIRLGLNKVCEEGIRIDSIGIDTWGVDFVLLDQQGQRVGLPVAYRDSRTNGLMAQAQQQLGKRDIYQRSGIQFLPFNTLYQLRALTEQQPELIPHIAHALLMPDYFSYRLTGKMNWEYTNATTTQLVNINSDDWDESLLAWSGANKAWFGRPTHPGNVIGHWICPQGNEIPVVAVASHDTASAVIASPLNGSRAAYLSSGTWSLMGFESQTPFTNDTALAANITNEGGAEGRYRVLKNIMGLWLLQRVLQEQQINDLPALISATQALPACRFIINPNDDRFINPETMCSEIQAACRETAQPIPESDAELARCIFDSLALLYADVLHELAQLRGEDFSQLYIVGGGCQNTLLNQLCADACGIRVIAGPVEASTLGNIGIQLMTLDELNNVDDFRQVVSTTANLTTFTPNPDSEIAHYVARIHSTRQTKELCA</sequence>
<accession>A8A707</accession>